<sequence length="268" mass="28170">MAAVRVLVASRLAAASAFTSLSPGGRTPSQRAALHLSVPRPAARVALVLSGCGVYDGTEIHEASAILVHLSRGGAEVQIFAPDVPQMHVIDHTKGQPSEGESRNVLTESARIARGKITDLANLSAANHDAAIFPGGFGAAKNLSTFAVDGKDCKVNKEVERVLKEFHQAGKPIGLCCIAPVLAAKVLRGVEVTVGHEQEEGGKWPYAGTAEAIKALGAKHCVKEVVEAHVDQKNKVVTTPAFMCETALHYIHDGIGAMVRKVLELTGK</sequence>
<organism>
    <name type="scientific">Homo sapiens</name>
    <name type="common">Human</name>
    <dbReference type="NCBI Taxonomy" id="9606"/>
    <lineage>
        <taxon>Eukaryota</taxon>
        <taxon>Metazoa</taxon>
        <taxon>Chordata</taxon>
        <taxon>Craniata</taxon>
        <taxon>Vertebrata</taxon>
        <taxon>Euteleostomi</taxon>
        <taxon>Mammalia</taxon>
        <taxon>Eutheria</taxon>
        <taxon>Euarchontoglires</taxon>
        <taxon>Primates</taxon>
        <taxon>Haplorrhini</taxon>
        <taxon>Catarrhini</taxon>
        <taxon>Hominidae</taxon>
        <taxon>Homo</taxon>
    </lineage>
</organism>
<gene>
    <name evidence="5" type="primary">GATD3</name>
    <name evidence="5" type="synonym">C21orf33</name>
    <name type="synonym">GATD3A</name>
</gene>
<evidence type="ECO:0000250" key="1">
    <source>
        <dbReference type="UniProtKB" id="Q9D172"/>
    </source>
</evidence>
<evidence type="ECO:0000269" key="2">
    <source>
    </source>
</evidence>
<evidence type="ECO:0000303" key="3">
    <source>
    </source>
</evidence>
<evidence type="ECO:0000305" key="4"/>
<evidence type="ECO:0000312" key="5">
    <source>
        <dbReference type="HGNC" id="HGNC:1273"/>
    </source>
</evidence>
<keyword id="KW-0007">Acetylation</keyword>
<keyword id="KW-0025">Alternative splicing</keyword>
<keyword id="KW-0903">Direct protein sequencing</keyword>
<keyword id="KW-0496">Mitochondrion</keyword>
<keyword id="KW-1267">Proteomics identification</keyword>
<keyword id="KW-1185">Reference proteome</keyword>
<keyword id="KW-0809">Transit peptide</keyword>
<accession>P0DPI2</accession>
<accession>A6NFJ6</accession>
<accession>A6NJY7</accession>
<accession>O00650</accession>
<accession>O00660</accession>
<accession>O15011</accession>
<accession>O15012</accession>
<accession>P30042</accession>
<accession>P55346</accession>
<accession>P78474</accession>
<accession>Q92505</accession>
<accession>Q92507</accession>
<comment type="subcellular location">
    <subcellularLocation>
        <location evidence="4">Mitochondrion</location>
    </subcellularLocation>
</comment>
<comment type="alternative products">
    <event type="alternative splicing"/>
    <isoform>
        <id>P0DPI2-1</id>
        <id>P30042-1</id>
        <name>1</name>
        <name>Long</name>
        <sequence type="displayed"/>
    </isoform>
    <isoform>
        <id>P0DPI2-2</id>
        <id>P30042-2</id>
        <name>2</name>
        <name>Short</name>
        <sequence type="described" ref="VSP_001454"/>
    </isoform>
</comment>
<comment type="similarity">
    <text evidence="4">Belongs to the GATD3 family.</text>
</comment>
<reference key="1">
    <citation type="journal article" date="1997" name="Genomics">
        <title>Genomic organization and complete nucleotide sequence of the human PWP2 gene on chromosome 21.</title>
        <authorList>
            <person name="Nagamine K."/>
            <person name="Kudoh J."/>
            <person name="Minoshima S."/>
            <person name="Kawasaki K."/>
            <person name="Asakawa S."/>
            <person name="Ito F."/>
            <person name="Shimizu N."/>
        </authorList>
    </citation>
    <scope>NUCLEOTIDE SEQUENCE [GENOMIC DNA] (ISOFORM 1)</scope>
    <scope>NUCLEOTIDE SEQUENCE [GENOMIC DNA] OF 1-226 (ISOFORM 2)</scope>
</reference>
<reference key="2">
    <citation type="journal article" date="2000" name="Nature">
        <title>The DNA sequence of human chromosome 21.</title>
        <authorList>
            <person name="Hattori M."/>
            <person name="Fujiyama A."/>
            <person name="Taylor T.D."/>
            <person name="Watanabe H."/>
            <person name="Yada T."/>
            <person name="Park H.-S."/>
            <person name="Toyoda A."/>
            <person name="Ishii K."/>
            <person name="Totoki Y."/>
            <person name="Choi D.-K."/>
            <person name="Groner Y."/>
            <person name="Soeda E."/>
            <person name="Ohki M."/>
            <person name="Takagi T."/>
            <person name="Sakaki Y."/>
            <person name="Taudien S."/>
            <person name="Blechschmidt K."/>
            <person name="Polley A."/>
            <person name="Menzel U."/>
            <person name="Delabar J."/>
            <person name="Kumpf K."/>
            <person name="Lehmann R."/>
            <person name="Patterson D."/>
            <person name="Reichwald K."/>
            <person name="Rump A."/>
            <person name="Schillhabel M."/>
            <person name="Schudy A."/>
            <person name="Zimmermann W."/>
            <person name="Rosenthal A."/>
            <person name="Kudoh J."/>
            <person name="Shibuya K."/>
            <person name="Kawasaki K."/>
            <person name="Asakawa S."/>
            <person name="Shintani A."/>
            <person name="Sasaki T."/>
            <person name="Nagamine K."/>
            <person name="Mitsuyama S."/>
            <person name="Antonarakis S.E."/>
            <person name="Minoshima S."/>
            <person name="Shimizu N."/>
            <person name="Nordsiek G."/>
            <person name="Hornischer K."/>
            <person name="Brandt P."/>
            <person name="Scharfe M."/>
            <person name="Schoen O."/>
            <person name="Desario A."/>
            <person name="Reichelt J."/>
            <person name="Kauer G."/>
            <person name="Bloecker H."/>
            <person name="Ramser J."/>
            <person name="Beck A."/>
            <person name="Klages S."/>
            <person name="Hennig S."/>
            <person name="Riesselmann L."/>
            <person name="Dagand E."/>
            <person name="Wehrmeyer S."/>
            <person name="Borzym K."/>
            <person name="Gardiner K."/>
            <person name="Nizetic D."/>
            <person name="Francis F."/>
            <person name="Lehrach H."/>
            <person name="Reinhardt R."/>
            <person name="Yaspo M.-L."/>
        </authorList>
    </citation>
    <scope>NUCLEOTIDE SEQUENCE [LARGE SCALE GENOMIC DNA]</scope>
</reference>
<reference key="3">
    <citation type="submission" date="2007-03" db="UniProtKB">
        <authorList>
            <person name="Lubec G."/>
            <person name="Vishwanath V."/>
        </authorList>
    </citation>
    <scope>PROTEIN SEQUENCE OF 117-141</scope>
    <scope>IDENTIFICATION BY MASS SPECTROMETRY</scope>
    <source>
        <tissue>Brain</tissue>
        <tissue>Cajal-Retzius cell</tissue>
    </source>
</reference>
<reference key="4">
    <citation type="submission" date="1996-06" db="EMBL/GenBank/DDBJ databases">
        <authorList>
            <person name="Shimizu N."/>
        </authorList>
    </citation>
    <scope>NUCLEOTIDE SEQUENCE [GENOMIC DNA] OF 144-174</scope>
</reference>
<reference key="5">
    <citation type="journal article" date="1992" name="Electrophoresis">
        <title>Human liver protein map: a reference database established by microsequencing and gel comparison.</title>
        <authorList>
            <person name="Hochstrasser D.F."/>
            <person name="Frutiger S."/>
            <person name="Paquet N."/>
            <person name="Bairoch A."/>
            <person name="Ravier F."/>
            <person name="Pasquali C."/>
            <person name="Sanchez J.-C."/>
            <person name="Tissot J.-D."/>
            <person name="Bjellqvist B."/>
            <person name="Vargas R."/>
            <person name="Appel R.D."/>
            <person name="Hughes G.J."/>
        </authorList>
    </citation>
    <scope>PROTEIN SEQUENCE OF 42-54</scope>
    <source>
        <tissue>Liver</tissue>
    </source>
</reference>
<reference key="6">
    <citation type="journal article" date="2014" name="J. Proteomics">
        <title>An enzyme assisted RP-RPLC approach for in-depth analysis of human liver phosphoproteome.</title>
        <authorList>
            <person name="Bian Y."/>
            <person name="Song C."/>
            <person name="Cheng K."/>
            <person name="Dong M."/>
            <person name="Wang F."/>
            <person name="Huang J."/>
            <person name="Sun D."/>
            <person name="Wang L."/>
            <person name="Ye M."/>
            <person name="Zou H."/>
        </authorList>
    </citation>
    <scope>IDENTIFICATION BY MASS SPECTROMETRY [LARGE SCALE ANALYSIS]</scope>
    <source>
        <tissue>Liver</tissue>
    </source>
</reference>
<feature type="transit peptide" description="Mitochondrion" evidence="2">
    <location>
        <begin position="1"/>
        <end position="41"/>
    </location>
</feature>
<feature type="chain" id="PRO_0000008544" description="Glutamine amidotransferase-like class 1 domain-containing protein 3, mitochondrial">
    <location>
        <begin position="42"/>
        <end position="268"/>
    </location>
</feature>
<feature type="modified residue" description="N6-acetyllysine" evidence="1">
    <location>
        <position position="151"/>
    </location>
</feature>
<feature type="modified residue" description="N6-acetyllysine" evidence="1">
    <location>
        <position position="157"/>
    </location>
</feature>
<feature type="modified residue" description="N6-acetyllysine" evidence="1">
    <location>
        <position position="164"/>
    </location>
</feature>
<feature type="modified residue" description="N6-acetyllysine; alternate" evidence="1">
    <location>
        <position position="203"/>
    </location>
</feature>
<feature type="modified residue" description="N6-succinyllysine; alternate" evidence="1">
    <location>
        <position position="203"/>
    </location>
</feature>
<feature type="modified residue" description="N6-acetyllysine" evidence="1">
    <location>
        <position position="219"/>
    </location>
</feature>
<feature type="modified residue" description="N6-acetyllysine; alternate" evidence="1">
    <location>
        <position position="223"/>
    </location>
</feature>
<feature type="modified residue" description="N6-succinyllysine; alternate" evidence="1">
    <location>
        <position position="223"/>
    </location>
</feature>
<feature type="modified residue" description="N6-acetyllysine; alternate" evidence="1">
    <location>
        <position position="233"/>
    </location>
</feature>
<feature type="modified residue" description="N6-succinyllysine; alternate" evidence="1">
    <location>
        <position position="233"/>
    </location>
</feature>
<feature type="splice variant" id="VSP_001454" description="In isoform 2." evidence="3">
    <location>
        <begin position="144"/>
        <end position="174"/>
    </location>
</feature>
<feature type="sequence variant" id="VAR_027921" description="In dbSNP:rs17264865.">
    <original>V</original>
    <variation>M</variation>
    <location>
        <position position="148"/>
    </location>
</feature>
<feature type="sequence variant" id="VAR_020441" description="In dbSNP:rs2838497.">
    <original>L</original>
    <variation>V</variation>
    <location>
        <position position="248"/>
    </location>
</feature>
<name>GAL3A_HUMAN</name>
<dbReference type="EMBL" id="AP001753">
    <property type="protein sequence ID" value="BAA95554.1"/>
    <property type="molecule type" value="Genomic_DNA"/>
</dbReference>
<dbReference type="EMBL" id="AB001517">
    <property type="protein sequence ID" value="BAA21138.1"/>
    <property type="molecule type" value="Genomic_DNA"/>
</dbReference>
<dbReference type="EMBL" id="AB001517">
    <property type="protein sequence ID" value="BAA21139.1"/>
    <property type="molecule type" value="Genomic_DNA"/>
</dbReference>
<dbReference type="EMBL" id="AP001055">
    <property type="status" value="NOT_ANNOTATED_CDS"/>
    <property type="molecule type" value="Genomic_DNA"/>
</dbReference>
<dbReference type="EMBL" id="D86060">
    <property type="protein sequence ID" value="BAA20888.1"/>
    <property type="molecule type" value="Genomic_DNA"/>
</dbReference>
<dbReference type="CCDS" id="CCDS33580.1"/>
<dbReference type="CCDS" id="CCDS33581.1">
    <molecule id="P0DPI2-2"/>
</dbReference>
<dbReference type="PIR" id="JC4914">
    <property type="entry name" value="JC4914"/>
</dbReference>
<dbReference type="RefSeq" id="NP_004640.4">
    <molecule id="P0DPI2-1"/>
    <property type="nucleotide sequence ID" value="NM_004649.8"/>
</dbReference>
<dbReference type="RefSeq" id="NP_937798.4">
    <molecule id="P0DPI2-2"/>
    <property type="nucleotide sequence ID" value="NM_198155.5"/>
</dbReference>
<dbReference type="SMR" id="P0DPI2"/>
<dbReference type="BioGRID" id="113847">
    <property type="interactions" value="397"/>
</dbReference>
<dbReference type="BioGRID" id="3195145">
    <property type="interactions" value="12"/>
</dbReference>
<dbReference type="FunCoup" id="P0DPI2">
    <property type="interactions" value="97"/>
</dbReference>
<dbReference type="IntAct" id="P0DPI2">
    <property type="interactions" value="1"/>
</dbReference>
<dbReference type="STRING" id="9606.ENSP00000291577"/>
<dbReference type="ChEMBL" id="CHEMBL5169114"/>
<dbReference type="iPTMnet" id="P0DPI2"/>
<dbReference type="PhosphoSitePlus" id="P0DPI2"/>
<dbReference type="jPOST" id="P0DPI2"/>
<dbReference type="MassIVE" id="P0DPI2"/>
<dbReference type="PaxDb" id="9606-ENSP00000291577"/>
<dbReference type="PeptideAtlas" id="P0DPI2"/>
<dbReference type="ProteomicsDB" id="54621"/>
<dbReference type="ProteomicsDB" id="54622"/>
<dbReference type="Pumba" id="P0DPI2"/>
<dbReference type="Antibodypedia" id="10117">
    <property type="antibodies" value="165 antibodies from 22 providers"/>
</dbReference>
<dbReference type="DNASU" id="8209"/>
<dbReference type="Ensembl" id="ENST00000291577.11">
    <molecule id="P0DPI2-1"/>
    <property type="protein sequence ID" value="ENSP00000291577.6"/>
    <property type="gene ID" value="ENSG00000160221.18"/>
</dbReference>
<dbReference type="Ensembl" id="ENST00000348499.9">
    <molecule id="P0DPI2-2"/>
    <property type="protein sequence ID" value="ENSP00000344901.5"/>
    <property type="gene ID" value="ENSG00000160221.18"/>
</dbReference>
<dbReference type="GeneID" id="8209"/>
<dbReference type="KEGG" id="hsa:8209"/>
<dbReference type="MANE-Select" id="ENST00000291577.11">
    <property type="protein sequence ID" value="ENSP00000291577.6"/>
    <property type="RefSeq nucleotide sequence ID" value="NM_004649.8"/>
    <property type="RefSeq protein sequence ID" value="NP_004640.4"/>
</dbReference>
<dbReference type="AGR" id="HGNC:1273"/>
<dbReference type="CTD" id="8209"/>
<dbReference type="DisGeNET" id="8209"/>
<dbReference type="GeneCards" id="GATD3"/>
<dbReference type="HGNC" id="HGNC:1273">
    <property type="gene designation" value="GATD3"/>
</dbReference>
<dbReference type="HPA" id="ENSG00000160221">
    <property type="expression patterns" value="Tissue enhanced (tongue)"/>
</dbReference>
<dbReference type="MIM" id="601659">
    <property type="type" value="gene"/>
</dbReference>
<dbReference type="neXtProt" id="NX_P0DPI2"/>
<dbReference type="OpenTargets" id="ENSG00000160221"/>
<dbReference type="VEuPathDB" id="HostDB:ENSG00000160221"/>
<dbReference type="eggNOG" id="ENOG502QQFM">
    <property type="taxonomic scope" value="Eukaryota"/>
</dbReference>
<dbReference type="GeneTree" id="ENSGT00390000003706"/>
<dbReference type="InParanoid" id="P0DPI2"/>
<dbReference type="OMA" id="NRMAVFR"/>
<dbReference type="OrthoDB" id="543156at2759"/>
<dbReference type="PAN-GO" id="P0DPI2">
    <property type="GO annotations" value="1 GO annotation based on evolutionary models"/>
</dbReference>
<dbReference type="PathwayCommons" id="P0DPI2"/>
<dbReference type="CD-CODE" id="DEE660B4">
    <property type="entry name" value="Stress granule"/>
</dbReference>
<dbReference type="ChiTaRS" id="C21orf33">
    <property type="organism name" value="human"/>
</dbReference>
<dbReference type="Pharos" id="P0DPI2">
    <property type="development level" value="Tdark"/>
</dbReference>
<dbReference type="PRO" id="PR:P0DPI2"/>
<dbReference type="Proteomes" id="UP000005640">
    <property type="component" value="Chromosome 21"/>
</dbReference>
<dbReference type="Bgee" id="ENSG00000160221">
    <property type="expression patterns" value="Expressed in mucosa of transverse colon and 100 other cell types or tissues"/>
</dbReference>
<dbReference type="ExpressionAtlas" id="P0DPI2">
    <property type="expression patterns" value="baseline and differential"/>
</dbReference>
<dbReference type="GO" id="GO:0005739">
    <property type="term" value="C:mitochondrion"/>
    <property type="evidence" value="ECO:0006056"/>
    <property type="project" value="FlyBase"/>
</dbReference>
<dbReference type="CDD" id="cd03133">
    <property type="entry name" value="GATase1_ES1"/>
    <property type="match status" value="1"/>
</dbReference>
<dbReference type="FunFam" id="3.40.50.880:FF:000035">
    <property type="entry name" value="ES1 protein homolog, mitochondrial isoform X1"/>
    <property type="match status" value="1"/>
</dbReference>
<dbReference type="Gene3D" id="3.40.50.880">
    <property type="match status" value="1"/>
</dbReference>
<dbReference type="InterPro" id="IPR029062">
    <property type="entry name" value="Class_I_gatase-like"/>
</dbReference>
<dbReference type="NCBIfam" id="NF008747">
    <property type="entry name" value="PRK11780.1"/>
    <property type="match status" value="1"/>
</dbReference>
<dbReference type="PANTHER" id="PTHR10224">
    <property type="entry name" value="ES1 PROTEIN HOMOLOG, MITOCHONDRIAL"/>
    <property type="match status" value="1"/>
</dbReference>
<dbReference type="PANTHER" id="PTHR10224:SF9">
    <property type="entry name" value="GLUTAMINE AMIDOTRANSFERASE-LIKE CLASS 1 DOMAIN-CONTAINING PROTEIN 3, MITOCHONDRIAL-RELATED"/>
    <property type="match status" value="1"/>
</dbReference>
<dbReference type="SUPFAM" id="SSF52317">
    <property type="entry name" value="Class I glutamine amidotransferase-like"/>
    <property type="match status" value="1"/>
</dbReference>
<protein>
    <recommendedName>
        <fullName evidence="4">Glutamine amidotransferase-like class 1 domain-containing protein 3, mitochondrial</fullName>
    </recommendedName>
</protein>
<proteinExistence type="evidence at protein level"/>